<dbReference type="EMBL" id="CU928163">
    <property type="protein sequence ID" value="CAR11231.1"/>
    <property type="molecule type" value="Genomic_DNA"/>
</dbReference>
<dbReference type="RefSeq" id="WP_000906180.1">
    <property type="nucleotide sequence ID" value="NC_011751.1"/>
</dbReference>
<dbReference type="RefSeq" id="YP_002410786.1">
    <property type="nucleotide sequence ID" value="NC_011751.1"/>
</dbReference>
<dbReference type="SMR" id="B7N7N1"/>
<dbReference type="STRING" id="585056.ECUMN_0006"/>
<dbReference type="KEGG" id="eum:ECUMN_0006"/>
<dbReference type="PATRIC" id="fig|585056.7.peg.190"/>
<dbReference type="HOGENOM" id="CLU_061989_0_0_6"/>
<dbReference type="Proteomes" id="UP000007097">
    <property type="component" value="Chromosome"/>
</dbReference>
<dbReference type="GO" id="GO:0005829">
    <property type="term" value="C:cytosol"/>
    <property type="evidence" value="ECO:0007669"/>
    <property type="project" value="TreeGrafter"/>
</dbReference>
<dbReference type="GO" id="GO:0033194">
    <property type="term" value="P:response to hydroperoxide"/>
    <property type="evidence" value="ECO:0007669"/>
    <property type="project" value="TreeGrafter"/>
</dbReference>
<dbReference type="HAMAP" id="MF_00652">
    <property type="entry name" value="UPF0246"/>
    <property type="match status" value="1"/>
</dbReference>
<dbReference type="InterPro" id="IPR005583">
    <property type="entry name" value="YaaA"/>
</dbReference>
<dbReference type="NCBIfam" id="NF002541">
    <property type="entry name" value="PRK02101.1-1"/>
    <property type="match status" value="1"/>
</dbReference>
<dbReference type="NCBIfam" id="NF002542">
    <property type="entry name" value="PRK02101.1-3"/>
    <property type="match status" value="1"/>
</dbReference>
<dbReference type="PANTHER" id="PTHR30283:SF4">
    <property type="entry name" value="PEROXIDE STRESS RESISTANCE PROTEIN YAAA"/>
    <property type="match status" value="1"/>
</dbReference>
<dbReference type="PANTHER" id="PTHR30283">
    <property type="entry name" value="PEROXIDE STRESS RESPONSE PROTEIN YAAA"/>
    <property type="match status" value="1"/>
</dbReference>
<dbReference type="Pfam" id="PF03883">
    <property type="entry name" value="H2O2_YaaD"/>
    <property type="match status" value="1"/>
</dbReference>
<accession>B7N7N1</accession>
<reference key="1">
    <citation type="journal article" date="2009" name="PLoS Genet.">
        <title>Organised genome dynamics in the Escherichia coli species results in highly diverse adaptive paths.</title>
        <authorList>
            <person name="Touchon M."/>
            <person name="Hoede C."/>
            <person name="Tenaillon O."/>
            <person name="Barbe V."/>
            <person name="Baeriswyl S."/>
            <person name="Bidet P."/>
            <person name="Bingen E."/>
            <person name="Bonacorsi S."/>
            <person name="Bouchier C."/>
            <person name="Bouvet O."/>
            <person name="Calteau A."/>
            <person name="Chiapello H."/>
            <person name="Clermont O."/>
            <person name="Cruveiller S."/>
            <person name="Danchin A."/>
            <person name="Diard M."/>
            <person name="Dossat C."/>
            <person name="Karoui M.E."/>
            <person name="Frapy E."/>
            <person name="Garry L."/>
            <person name="Ghigo J.M."/>
            <person name="Gilles A.M."/>
            <person name="Johnson J."/>
            <person name="Le Bouguenec C."/>
            <person name="Lescat M."/>
            <person name="Mangenot S."/>
            <person name="Martinez-Jehanne V."/>
            <person name="Matic I."/>
            <person name="Nassif X."/>
            <person name="Oztas S."/>
            <person name="Petit M.A."/>
            <person name="Pichon C."/>
            <person name="Rouy Z."/>
            <person name="Ruf C.S."/>
            <person name="Schneider D."/>
            <person name="Tourret J."/>
            <person name="Vacherie B."/>
            <person name="Vallenet D."/>
            <person name="Medigue C."/>
            <person name="Rocha E.P.C."/>
            <person name="Denamur E."/>
        </authorList>
    </citation>
    <scope>NUCLEOTIDE SEQUENCE [LARGE SCALE GENOMIC DNA]</scope>
    <source>
        <strain>UMN026 / ExPEC</strain>
    </source>
</reference>
<organism>
    <name type="scientific">Escherichia coli O17:K52:H18 (strain UMN026 / ExPEC)</name>
    <dbReference type="NCBI Taxonomy" id="585056"/>
    <lineage>
        <taxon>Bacteria</taxon>
        <taxon>Pseudomonadati</taxon>
        <taxon>Pseudomonadota</taxon>
        <taxon>Gammaproteobacteria</taxon>
        <taxon>Enterobacterales</taxon>
        <taxon>Enterobacteriaceae</taxon>
        <taxon>Escherichia</taxon>
    </lineage>
</organism>
<feature type="chain" id="PRO_1000131116" description="UPF0246 protein YaaA">
    <location>
        <begin position="1"/>
        <end position="258"/>
    </location>
</feature>
<sequence>MLILISPAKTLDYQSPLPTTRYTLPELLDNSQQLIHEARKLTPPQISTLMRISDKLAGINAARFNDWQPDFTPENARQAILAFKGDVYTGLQAETFSEDDFDFAQQHLRMLSGLYGVLRPLDLMQPYRLEMGIRLENARGKDLYQFWGDIITNKLNEALAAQGDNVVINLASDEYFKSVKPKKLNAEIIKPVFLDEKNGKFKIISFYAKKARGLMSRFIIENRLTKPEQLTGFNSEGYFFDEASSSNGELVFKRYEQR</sequence>
<name>YAAA_ECOLU</name>
<gene>
    <name evidence="1" type="primary">yaaA</name>
    <name type="ordered locus">ECUMN_0006</name>
</gene>
<protein>
    <recommendedName>
        <fullName evidence="1">UPF0246 protein YaaA</fullName>
    </recommendedName>
</protein>
<comment type="similarity">
    <text evidence="1">Belongs to the UPF0246 family.</text>
</comment>
<evidence type="ECO:0000255" key="1">
    <source>
        <dbReference type="HAMAP-Rule" id="MF_00652"/>
    </source>
</evidence>
<proteinExistence type="inferred from homology"/>